<organism>
    <name type="scientific">Thermofilum pendens (strain DSM 2475 / Hrk 5)</name>
    <dbReference type="NCBI Taxonomy" id="368408"/>
    <lineage>
        <taxon>Archaea</taxon>
        <taxon>Thermoproteota</taxon>
        <taxon>Thermoprotei</taxon>
        <taxon>Thermofilales</taxon>
        <taxon>Thermofilaceae</taxon>
        <taxon>Thermofilum</taxon>
    </lineage>
</organism>
<feature type="chain" id="PRO_1000020545" description="Threonine--tRNA ligase">
    <location>
        <begin position="1"/>
        <end position="608"/>
    </location>
</feature>
<feature type="region of interest" description="Editing domain" evidence="1">
    <location>
        <begin position="1"/>
        <end position="145"/>
    </location>
</feature>
<feature type="region of interest" description="Catalytic" evidence="1">
    <location>
        <begin position="192"/>
        <end position="489"/>
    </location>
</feature>
<feature type="region of interest" description="Catalytic">
    <location>
        <begin position="193"/>
        <end position="489"/>
    </location>
</feature>
<feature type="binding site" evidence="1">
    <location>
        <position position="286"/>
    </location>
    <ligand>
        <name>Zn(2+)</name>
        <dbReference type="ChEBI" id="CHEBI:29105"/>
    </ligand>
</feature>
<feature type="binding site" evidence="1">
    <location>
        <position position="337"/>
    </location>
    <ligand>
        <name>Zn(2+)</name>
        <dbReference type="ChEBI" id="CHEBI:29105"/>
    </ligand>
</feature>
<feature type="binding site" evidence="1">
    <location>
        <position position="458"/>
    </location>
    <ligand>
        <name>Zn(2+)</name>
        <dbReference type="ChEBI" id="CHEBI:29105"/>
    </ligand>
</feature>
<gene>
    <name evidence="1" type="primary">thrS</name>
    <name type="ordered locus">Tpen_0754</name>
</gene>
<protein>
    <recommendedName>
        <fullName evidence="1">Threonine--tRNA ligase</fullName>
        <ecNumber evidence="1">6.1.1.3</ecNumber>
    </recommendedName>
    <alternativeName>
        <fullName evidence="1">Threonyl-tRNA synthetase</fullName>
        <shortName evidence="1">ThrRS</shortName>
    </alternativeName>
</protein>
<reference key="1">
    <citation type="journal article" date="2008" name="J. Bacteriol.">
        <title>Genome sequence of Thermofilum pendens reveals an exceptional loss of biosynthetic pathways without genome reduction.</title>
        <authorList>
            <person name="Anderson I."/>
            <person name="Rodriguez J."/>
            <person name="Susanti D."/>
            <person name="Porat I."/>
            <person name="Reich C."/>
            <person name="Ulrich L.E."/>
            <person name="Elkins J.G."/>
            <person name="Mavromatis K."/>
            <person name="Lykidis A."/>
            <person name="Kim E."/>
            <person name="Thompson L.S."/>
            <person name="Nolan M."/>
            <person name="Land M."/>
            <person name="Copeland A."/>
            <person name="Lapidus A."/>
            <person name="Lucas S."/>
            <person name="Detter C."/>
            <person name="Zhulin I.B."/>
            <person name="Olsen G.J."/>
            <person name="Whitman W."/>
            <person name="Mukhopadhyay B."/>
            <person name="Bristow J."/>
            <person name="Kyrpides N."/>
        </authorList>
    </citation>
    <scope>NUCLEOTIDE SEQUENCE [LARGE SCALE GENOMIC DNA]</scope>
    <source>
        <strain>DSM 2475 / Hrk 5</strain>
    </source>
</reference>
<name>SYT_THEPD</name>
<accession>A1RY76</accession>
<comment type="function">
    <text evidence="1">Catalyzes the attachment of threonine to tRNA(Thr) in a two-step reaction: L-threonine is first activated by ATP to form Thr-AMP and then transferred to the acceptor end of tRNA(Thr). Also edits incorrectly charged L-seryl-tRNA(Thr).</text>
</comment>
<comment type="catalytic activity">
    <reaction evidence="1">
        <text>tRNA(Thr) + L-threonine + ATP = L-threonyl-tRNA(Thr) + AMP + diphosphate + H(+)</text>
        <dbReference type="Rhea" id="RHEA:24624"/>
        <dbReference type="Rhea" id="RHEA-COMP:9670"/>
        <dbReference type="Rhea" id="RHEA-COMP:9704"/>
        <dbReference type="ChEBI" id="CHEBI:15378"/>
        <dbReference type="ChEBI" id="CHEBI:30616"/>
        <dbReference type="ChEBI" id="CHEBI:33019"/>
        <dbReference type="ChEBI" id="CHEBI:57926"/>
        <dbReference type="ChEBI" id="CHEBI:78442"/>
        <dbReference type="ChEBI" id="CHEBI:78534"/>
        <dbReference type="ChEBI" id="CHEBI:456215"/>
        <dbReference type="EC" id="6.1.1.3"/>
    </reaction>
</comment>
<comment type="cofactor">
    <cofactor evidence="1">
        <name>Zn(2+)</name>
        <dbReference type="ChEBI" id="CHEBI:29105"/>
    </cofactor>
    <text evidence="1">Binds 1 zinc ion per subunit.</text>
</comment>
<comment type="subunit">
    <text evidence="1">Homodimer.</text>
</comment>
<comment type="subcellular location">
    <subcellularLocation>
        <location evidence="1">Cytoplasm</location>
    </subcellularLocation>
</comment>
<comment type="domain">
    <text evidence="1">The N-terminal domain is an archaea-specific tRNA-editing domain that hydrolyzes incorrectly charged L-seryl-tRNA(Thr). Catalysis of tRNA editing is performed by the charged tRNA itself.</text>
</comment>
<comment type="similarity">
    <text evidence="1">Belongs to the class-II aminoacyl-tRNA synthetase family.</text>
</comment>
<sequence length="608" mass="69661">MKTLLIHAKHFEYEAREKALDAAESIDGNRSGSFENALVVFVTVEKGDGSSQDVVEEAAADVLDVFRRVGASRVVVYPYAHLSDDLADPEEAKRVLSQLAERISSAGVPVSRAPFGWYKRFSVECYGHPLSELSRTIKPGRRVRPGYADFAVMFPDGRIVGIEELRAEELPEDFVALLEAEVFKKKREGGEPKYLEYCRKFGFEWEPMSDLGHMRYGPEATIMLDAVAEYAWQCARSLGIPVYKVRGTNTFNLSFKPVAQHAQLFGDRLYQMEVDEKKLILRYAACHQQFAMVKDWEISYRDLPFGAFEVADSYRLEQPGELLLCFRLRKFYMPDLHVFCKDLAEAMEVSFRIHSKIYEEIRKLGRDYVSIYNLTRSFLEQHRDYLKRLVEMEGKPVLLHFVPEGKYYWVINVEYNIIDELGRPREIGTFQIDVGNAERFGITYVDENNTRRYPVIIHTAIIGSLERYVFAVLDTAAKKARAGEVPSLPLWLSPVQVRVIPHSSEYLKLADSIADKLEEQGIRVDVDDREESLAKRIRDAEVKWIPYVVVVGKREAESGKLTVRVRGQGQYEMSLEELVGRLVSELKGYPRVSAALPRYVSARPRYSP</sequence>
<proteinExistence type="inferred from homology"/>
<dbReference type="EC" id="6.1.1.3" evidence="1"/>
<dbReference type="EMBL" id="CP000505">
    <property type="protein sequence ID" value="ABL78156.1"/>
    <property type="molecule type" value="Genomic_DNA"/>
</dbReference>
<dbReference type="RefSeq" id="WP_011752421.1">
    <property type="nucleotide sequence ID" value="NC_008698.1"/>
</dbReference>
<dbReference type="SMR" id="A1RY76"/>
<dbReference type="STRING" id="368408.Tpen_0754"/>
<dbReference type="EnsemblBacteria" id="ABL78156">
    <property type="protein sequence ID" value="ABL78156"/>
    <property type="gene ID" value="Tpen_0754"/>
</dbReference>
<dbReference type="GeneID" id="4601075"/>
<dbReference type="KEGG" id="tpe:Tpen_0754"/>
<dbReference type="eggNOG" id="arCOG00401">
    <property type="taxonomic scope" value="Archaea"/>
</dbReference>
<dbReference type="HOGENOM" id="CLU_029833_0_0_2"/>
<dbReference type="OrthoDB" id="372136at2157"/>
<dbReference type="Proteomes" id="UP000000641">
    <property type="component" value="Chromosome"/>
</dbReference>
<dbReference type="GO" id="GO:0005737">
    <property type="term" value="C:cytoplasm"/>
    <property type="evidence" value="ECO:0007669"/>
    <property type="project" value="UniProtKB-SubCell"/>
</dbReference>
<dbReference type="GO" id="GO:0005524">
    <property type="term" value="F:ATP binding"/>
    <property type="evidence" value="ECO:0007669"/>
    <property type="project" value="UniProtKB-UniRule"/>
</dbReference>
<dbReference type="GO" id="GO:0004829">
    <property type="term" value="F:threonine-tRNA ligase activity"/>
    <property type="evidence" value="ECO:0007669"/>
    <property type="project" value="UniProtKB-UniRule"/>
</dbReference>
<dbReference type="GO" id="GO:0000049">
    <property type="term" value="F:tRNA binding"/>
    <property type="evidence" value="ECO:0007669"/>
    <property type="project" value="UniProtKB-KW"/>
</dbReference>
<dbReference type="GO" id="GO:0008270">
    <property type="term" value="F:zinc ion binding"/>
    <property type="evidence" value="ECO:0007669"/>
    <property type="project" value="InterPro"/>
</dbReference>
<dbReference type="GO" id="GO:0006435">
    <property type="term" value="P:threonyl-tRNA aminoacylation"/>
    <property type="evidence" value="ECO:0007669"/>
    <property type="project" value="UniProtKB-UniRule"/>
</dbReference>
<dbReference type="CDD" id="cd00860">
    <property type="entry name" value="ThrRS_anticodon"/>
    <property type="match status" value="1"/>
</dbReference>
<dbReference type="FunFam" id="3.40.50.800:FF:000001">
    <property type="entry name" value="Threonine--tRNA ligase"/>
    <property type="match status" value="1"/>
</dbReference>
<dbReference type="Gene3D" id="3.40.50.800">
    <property type="entry name" value="Anticodon-binding domain"/>
    <property type="match status" value="1"/>
</dbReference>
<dbReference type="Gene3D" id="3.30.930.10">
    <property type="entry name" value="Bira Bifunctional Protein, Domain 2"/>
    <property type="match status" value="1"/>
</dbReference>
<dbReference type="Gene3D" id="3.50.80.10">
    <property type="entry name" value="D-tyrosyl-tRNA(Tyr) deacylase"/>
    <property type="match status" value="1"/>
</dbReference>
<dbReference type="HAMAP" id="MF_00184">
    <property type="entry name" value="Thr_tRNA_synth"/>
    <property type="match status" value="1"/>
</dbReference>
<dbReference type="InterPro" id="IPR002314">
    <property type="entry name" value="aa-tRNA-synt_IIb"/>
</dbReference>
<dbReference type="InterPro" id="IPR006195">
    <property type="entry name" value="aa-tRNA-synth_II"/>
</dbReference>
<dbReference type="InterPro" id="IPR045864">
    <property type="entry name" value="aa-tRNA-synth_II/BPL/LPL"/>
</dbReference>
<dbReference type="InterPro" id="IPR004154">
    <property type="entry name" value="Anticodon-bd"/>
</dbReference>
<dbReference type="InterPro" id="IPR036621">
    <property type="entry name" value="Anticodon-bd_dom_sf"/>
</dbReference>
<dbReference type="InterPro" id="IPR023509">
    <property type="entry name" value="DTD-like_sf"/>
</dbReference>
<dbReference type="InterPro" id="IPR002320">
    <property type="entry name" value="Thr-tRNA-ligase_IIa"/>
</dbReference>
<dbReference type="InterPro" id="IPR015011">
    <property type="entry name" value="Threonyl-tRNA_syn_edit_dom_arc"/>
</dbReference>
<dbReference type="InterPro" id="IPR047246">
    <property type="entry name" value="ThrRS_anticodon"/>
</dbReference>
<dbReference type="NCBIfam" id="NF003068">
    <property type="entry name" value="PRK03991.1"/>
    <property type="match status" value="1"/>
</dbReference>
<dbReference type="PANTHER" id="PTHR11451:SF44">
    <property type="entry name" value="THREONINE--TRNA LIGASE, CHLOROPLASTIC_MITOCHONDRIAL 2"/>
    <property type="match status" value="1"/>
</dbReference>
<dbReference type="PANTHER" id="PTHR11451">
    <property type="entry name" value="THREONINE-TRNA LIGASE"/>
    <property type="match status" value="1"/>
</dbReference>
<dbReference type="Pfam" id="PF03129">
    <property type="entry name" value="HGTP_anticodon"/>
    <property type="match status" value="1"/>
</dbReference>
<dbReference type="Pfam" id="PF00587">
    <property type="entry name" value="tRNA-synt_2b"/>
    <property type="match status" value="1"/>
</dbReference>
<dbReference type="Pfam" id="PF08915">
    <property type="entry name" value="tRNA-Thr_ED"/>
    <property type="match status" value="1"/>
</dbReference>
<dbReference type="PRINTS" id="PR01047">
    <property type="entry name" value="TRNASYNTHTHR"/>
</dbReference>
<dbReference type="SUPFAM" id="SSF52954">
    <property type="entry name" value="Class II aaRS ABD-related"/>
    <property type="match status" value="1"/>
</dbReference>
<dbReference type="SUPFAM" id="SSF55681">
    <property type="entry name" value="Class II aaRS and biotin synthetases"/>
    <property type="match status" value="1"/>
</dbReference>
<dbReference type="PROSITE" id="PS50862">
    <property type="entry name" value="AA_TRNA_LIGASE_II"/>
    <property type="match status" value="1"/>
</dbReference>
<evidence type="ECO:0000255" key="1">
    <source>
        <dbReference type="HAMAP-Rule" id="MF_00184"/>
    </source>
</evidence>
<keyword id="KW-0030">Aminoacyl-tRNA synthetase</keyword>
<keyword id="KW-0067">ATP-binding</keyword>
<keyword id="KW-0963">Cytoplasm</keyword>
<keyword id="KW-0436">Ligase</keyword>
<keyword id="KW-0479">Metal-binding</keyword>
<keyword id="KW-0547">Nucleotide-binding</keyword>
<keyword id="KW-0648">Protein biosynthesis</keyword>
<keyword id="KW-1185">Reference proteome</keyword>
<keyword id="KW-0694">RNA-binding</keyword>
<keyword id="KW-0820">tRNA-binding</keyword>
<keyword id="KW-0862">Zinc</keyword>